<name>RSGA_STRCO</name>
<keyword id="KW-0963">Cytoplasm</keyword>
<keyword id="KW-0342">GTP-binding</keyword>
<keyword id="KW-0378">Hydrolase</keyword>
<keyword id="KW-0479">Metal-binding</keyword>
<keyword id="KW-0547">Nucleotide-binding</keyword>
<keyword id="KW-1185">Reference proteome</keyword>
<keyword id="KW-0690">Ribosome biogenesis</keyword>
<keyword id="KW-0694">RNA-binding</keyword>
<keyword id="KW-0699">rRNA-binding</keyword>
<keyword id="KW-0862">Zinc</keyword>
<gene>
    <name evidence="1" type="primary">rsgA</name>
    <name type="ordered locus">SCO6149</name>
    <name type="ORF">SC1A9.13</name>
</gene>
<feature type="chain" id="PRO_0000171526" description="Small ribosomal subunit biogenesis GTPase RsgA">
    <location>
        <begin position="1"/>
        <end position="366"/>
    </location>
</feature>
<feature type="domain" description="CP-type G" evidence="2">
    <location>
        <begin position="107"/>
        <end position="266"/>
    </location>
</feature>
<feature type="binding site" evidence="1">
    <location>
        <begin position="154"/>
        <end position="157"/>
    </location>
    <ligand>
        <name>GTP</name>
        <dbReference type="ChEBI" id="CHEBI:37565"/>
    </ligand>
</feature>
<feature type="binding site" evidence="1">
    <location>
        <begin position="208"/>
        <end position="216"/>
    </location>
    <ligand>
        <name>GTP</name>
        <dbReference type="ChEBI" id="CHEBI:37565"/>
    </ligand>
</feature>
<feature type="binding site" evidence="1">
    <location>
        <position position="289"/>
    </location>
    <ligand>
        <name>Zn(2+)</name>
        <dbReference type="ChEBI" id="CHEBI:29105"/>
    </ligand>
</feature>
<feature type="binding site" evidence="1">
    <location>
        <position position="294"/>
    </location>
    <ligand>
        <name>Zn(2+)</name>
        <dbReference type="ChEBI" id="CHEBI:29105"/>
    </ligand>
</feature>
<feature type="binding site" evidence="1">
    <location>
        <position position="296"/>
    </location>
    <ligand>
        <name>Zn(2+)</name>
        <dbReference type="ChEBI" id="CHEBI:29105"/>
    </ligand>
</feature>
<feature type="binding site" evidence="1">
    <location>
        <position position="302"/>
    </location>
    <ligand>
        <name>Zn(2+)</name>
        <dbReference type="ChEBI" id="CHEBI:29105"/>
    </ligand>
</feature>
<accession>Q9ZBT9</accession>
<evidence type="ECO:0000255" key="1">
    <source>
        <dbReference type="HAMAP-Rule" id="MF_01820"/>
    </source>
</evidence>
<evidence type="ECO:0000255" key="2">
    <source>
        <dbReference type="PROSITE-ProRule" id="PRU01058"/>
    </source>
</evidence>
<organism>
    <name type="scientific">Streptomyces coelicolor (strain ATCC BAA-471 / A3(2) / M145)</name>
    <dbReference type="NCBI Taxonomy" id="100226"/>
    <lineage>
        <taxon>Bacteria</taxon>
        <taxon>Bacillati</taxon>
        <taxon>Actinomycetota</taxon>
        <taxon>Actinomycetes</taxon>
        <taxon>Kitasatosporales</taxon>
        <taxon>Streptomycetaceae</taxon>
        <taxon>Streptomyces</taxon>
        <taxon>Streptomyces albidoflavus group</taxon>
    </lineage>
</organism>
<comment type="function">
    <text evidence="1">One of several proteins that assist in the late maturation steps of the functional core of the 30S ribosomal subunit. Helps release RbfA from mature subunits. May play a role in the assembly of ribosomal proteins into the subunit. Circularly permuted GTPase that catalyzes slow GTP hydrolysis, GTPase activity is stimulated by the 30S ribosomal subunit.</text>
</comment>
<comment type="cofactor">
    <cofactor evidence="1">
        <name>Zn(2+)</name>
        <dbReference type="ChEBI" id="CHEBI:29105"/>
    </cofactor>
    <text evidence="1">Binds 1 zinc ion per subunit.</text>
</comment>
<comment type="subunit">
    <text evidence="1">Monomer. Associates with 30S ribosomal subunit, binds 16S rRNA.</text>
</comment>
<comment type="subcellular location">
    <subcellularLocation>
        <location evidence="1">Cytoplasm</location>
    </subcellularLocation>
</comment>
<comment type="similarity">
    <text evidence="1">Belongs to the TRAFAC class YlqF/YawG GTPase family. RsgA subfamily.</text>
</comment>
<reference key="1">
    <citation type="journal article" date="2002" name="Nature">
        <title>Complete genome sequence of the model actinomycete Streptomyces coelicolor A3(2).</title>
        <authorList>
            <person name="Bentley S.D."/>
            <person name="Chater K.F."/>
            <person name="Cerdeno-Tarraga A.-M."/>
            <person name="Challis G.L."/>
            <person name="Thomson N.R."/>
            <person name="James K.D."/>
            <person name="Harris D.E."/>
            <person name="Quail M.A."/>
            <person name="Kieser H."/>
            <person name="Harper D."/>
            <person name="Bateman A."/>
            <person name="Brown S."/>
            <person name="Chandra G."/>
            <person name="Chen C.W."/>
            <person name="Collins M."/>
            <person name="Cronin A."/>
            <person name="Fraser A."/>
            <person name="Goble A."/>
            <person name="Hidalgo J."/>
            <person name="Hornsby T."/>
            <person name="Howarth S."/>
            <person name="Huang C.-H."/>
            <person name="Kieser T."/>
            <person name="Larke L."/>
            <person name="Murphy L.D."/>
            <person name="Oliver K."/>
            <person name="O'Neil S."/>
            <person name="Rabbinowitsch E."/>
            <person name="Rajandream M.A."/>
            <person name="Rutherford K.M."/>
            <person name="Rutter S."/>
            <person name="Seeger K."/>
            <person name="Saunders D."/>
            <person name="Sharp S."/>
            <person name="Squares R."/>
            <person name="Squares S."/>
            <person name="Taylor K."/>
            <person name="Warren T."/>
            <person name="Wietzorrek A."/>
            <person name="Woodward J.R."/>
            <person name="Barrell B.G."/>
            <person name="Parkhill J."/>
            <person name="Hopwood D.A."/>
        </authorList>
    </citation>
    <scope>NUCLEOTIDE SEQUENCE [LARGE SCALE GENOMIC DNA]</scope>
    <source>
        <strain>ATCC BAA-471 / A3(2) / M145</strain>
    </source>
</reference>
<dbReference type="EC" id="3.6.1.-" evidence="1"/>
<dbReference type="EMBL" id="AL939126">
    <property type="protein sequence ID" value="CAA22383.1"/>
    <property type="molecule type" value="Genomic_DNA"/>
</dbReference>
<dbReference type="PIR" id="T34662">
    <property type="entry name" value="T34662"/>
</dbReference>
<dbReference type="RefSeq" id="NP_630254.1">
    <property type="nucleotide sequence ID" value="NC_003888.3"/>
</dbReference>
<dbReference type="RefSeq" id="WP_011030687.1">
    <property type="nucleotide sequence ID" value="NZ_VNID01000009.1"/>
</dbReference>
<dbReference type="SMR" id="Q9ZBT9"/>
<dbReference type="STRING" id="100226.gene:17763808"/>
<dbReference type="PaxDb" id="100226-SCO6149"/>
<dbReference type="KEGG" id="sco:SCO6149"/>
<dbReference type="PATRIC" id="fig|100226.15.peg.6254"/>
<dbReference type="eggNOG" id="COG1162">
    <property type="taxonomic scope" value="Bacteria"/>
</dbReference>
<dbReference type="HOGENOM" id="CLU_033617_0_1_11"/>
<dbReference type="InParanoid" id="Q9ZBT9"/>
<dbReference type="OrthoDB" id="9809485at2"/>
<dbReference type="PhylomeDB" id="Q9ZBT9"/>
<dbReference type="Proteomes" id="UP000001973">
    <property type="component" value="Chromosome"/>
</dbReference>
<dbReference type="GO" id="GO:0005737">
    <property type="term" value="C:cytoplasm"/>
    <property type="evidence" value="ECO:0007669"/>
    <property type="project" value="UniProtKB-SubCell"/>
</dbReference>
<dbReference type="GO" id="GO:0005525">
    <property type="term" value="F:GTP binding"/>
    <property type="evidence" value="ECO:0007669"/>
    <property type="project" value="UniProtKB-UniRule"/>
</dbReference>
<dbReference type="GO" id="GO:0003924">
    <property type="term" value="F:GTPase activity"/>
    <property type="evidence" value="ECO:0007669"/>
    <property type="project" value="UniProtKB-UniRule"/>
</dbReference>
<dbReference type="GO" id="GO:0046872">
    <property type="term" value="F:metal ion binding"/>
    <property type="evidence" value="ECO:0007669"/>
    <property type="project" value="UniProtKB-KW"/>
</dbReference>
<dbReference type="GO" id="GO:0019843">
    <property type="term" value="F:rRNA binding"/>
    <property type="evidence" value="ECO:0007669"/>
    <property type="project" value="UniProtKB-KW"/>
</dbReference>
<dbReference type="GO" id="GO:0042274">
    <property type="term" value="P:ribosomal small subunit biogenesis"/>
    <property type="evidence" value="ECO:0007669"/>
    <property type="project" value="UniProtKB-UniRule"/>
</dbReference>
<dbReference type="CDD" id="cd01854">
    <property type="entry name" value="YjeQ_EngC"/>
    <property type="match status" value="1"/>
</dbReference>
<dbReference type="Gene3D" id="3.40.50.300">
    <property type="entry name" value="P-loop containing nucleotide triphosphate hydrolases"/>
    <property type="match status" value="1"/>
</dbReference>
<dbReference type="Gene3D" id="1.10.40.50">
    <property type="entry name" value="Probable gtpase engc, domain 3"/>
    <property type="match status" value="1"/>
</dbReference>
<dbReference type="HAMAP" id="MF_01820">
    <property type="entry name" value="GTPase_RsgA"/>
    <property type="match status" value="1"/>
</dbReference>
<dbReference type="InterPro" id="IPR030378">
    <property type="entry name" value="G_CP_dom"/>
</dbReference>
<dbReference type="InterPro" id="IPR027417">
    <property type="entry name" value="P-loop_NTPase"/>
</dbReference>
<dbReference type="InterPro" id="IPR004881">
    <property type="entry name" value="Ribosome_biogen_GTPase_RsgA"/>
</dbReference>
<dbReference type="InterPro" id="IPR010914">
    <property type="entry name" value="RsgA_GTPase_dom"/>
</dbReference>
<dbReference type="NCBIfam" id="TIGR00157">
    <property type="entry name" value="ribosome small subunit-dependent GTPase A"/>
    <property type="match status" value="1"/>
</dbReference>
<dbReference type="PANTHER" id="PTHR32120">
    <property type="entry name" value="SMALL RIBOSOMAL SUBUNIT BIOGENESIS GTPASE RSGA"/>
    <property type="match status" value="1"/>
</dbReference>
<dbReference type="PANTHER" id="PTHR32120:SF10">
    <property type="entry name" value="SMALL RIBOSOMAL SUBUNIT BIOGENESIS GTPASE RSGA"/>
    <property type="match status" value="1"/>
</dbReference>
<dbReference type="Pfam" id="PF03193">
    <property type="entry name" value="RsgA_GTPase"/>
    <property type="match status" value="1"/>
</dbReference>
<dbReference type="SUPFAM" id="SSF52540">
    <property type="entry name" value="P-loop containing nucleoside triphosphate hydrolases"/>
    <property type="match status" value="1"/>
</dbReference>
<dbReference type="PROSITE" id="PS50936">
    <property type="entry name" value="ENGC_GTPASE"/>
    <property type="match status" value="1"/>
</dbReference>
<dbReference type="PROSITE" id="PS51721">
    <property type="entry name" value="G_CP"/>
    <property type="match status" value="1"/>
</dbReference>
<protein>
    <recommendedName>
        <fullName evidence="1">Small ribosomal subunit biogenesis GTPase RsgA</fullName>
        <ecNumber evidence="1">3.6.1.-</ecNumber>
    </recommendedName>
</protein>
<sequence>MTSTSSHSNHSALSSYGWDDSWADAFAPYAAEGLLPGRVVRVDRGQCDVVTADGVLRADTAFVTPHDPLRVVCTGDWVAVEPGGNPRYVRTYLPRRTAFVRSTSSKRSEGQILAANVDHAVVAVSLAVELDLARIERFLALAWESGAQPLVVLTKADLVPDPVTLAYLVQDVETAAPGVPVLPVSAEQGEGLDVLAAVVSGGTAVLLGQSGAGKSTLANALLGEAAMDVQAIRDVDGKGRHTTTTRNLLALPGGGVLIDTPGLRGVGLFDAGNGVDQVFAEIAELAEECRFHDCAHESEPGCAVLAAIDSGALPERRLESYRKLMRENQRIVAKTDARARAEIRKEYKRRGAIGKAAMEAKRGGLR</sequence>
<proteinExistence type="inferred from homology"/>